<proteinExistence type="evidence at protein level"/>
<reference key="1">
    <citation type="journal article" date="1987" name="Eur. J. Biochem.">
        <title>Nucleotide sequence of barley chymotrypsin inhibitor-2 (CI-2) and its expression in normal and high-lysine barley.</title>
        <authorList>
            <person name="Williamson M.S."/>
            <person name="Forde J."/>
            <person name="Buxton B."/>
            <person name="Kreis M."/>
        </authorList>
    </citation>
    <scope>NUCLEOTIDE SEQUENCE [MRNA]</scope>
    <source>
        <strain>cv. Hiproly</strain>
        <strain>cv. Sundance</strain>
    </source>
</reference>
<reference key="2">
    <citation type="journal article" date="1980" name="Carlsberg Res. Commun.">
        <title>Characteristics of Hiproly barley III. Amino acid sequences of two lysine-rich proteins.</title>
        <authorList>
            <person name="Svendsen I."/>
            <person name="Martin B."/>
            <person name="Jonassen I."/>
        </authorList>
    </citation>
    <scope>PROTEIN SEQUENCE OF 2-84</scope>
    <source>
        <strain>cv. Hiproly</strain>
    </source>
</reference>
<reference key="3">
    <citation type="journal article" date="1982" name="Carlsberg Res. Commun.">
        <title>Identification of the reactive sites in two homologous serine proteinase inhibitors isolated from barley.</title>
        <authorList>
            <person name="Jonassen I."/>
            <person name="Svendsen I."/>
        </authorList>
    </citation>
    <scope>REACTIVE SITE</scope>
</reference>
<reference key="4">
    <citation type="journal article" date="1987" name="Biochemistry">
        <title>Crystal and molecular structure of the serine proteinase inhibitor CI-2 from barley seeds.</title>
        <authorList>
            <person name="McPhalen C.A."/>
            <person name="James M.N.G."/>
        </authorList>
    </citation>
    <scope>X-RAY CRYSTALLOGRAPHY (2.0 ANGSTROMS)</scope>
</reference>
<reference key="5">
    <citation type="journal article" date="1994" name="Proc. Natl. Acad. Sci. U.S.A.">
        <title>Direct observation of better hydration at the N terminus of an alpha-helix with glycine rather than alanine as the N-cap residue.</title>
        <authorList>
            <person name="Harpaz Y."/>
            <person name="Elmasry N."/>
            <person name="Fersht A.R."/>
            <person name="Henrick K."/>
        </authorList>
    </citation>
    <scope>X-RAY CRYSTALLOGRAPHY (1.7 ANGSTROMS) OF 22-84</scope>
</reference>
<reference key="6">
    <citation type="journal article" date="1996" name="Fold. Des.">
        <title>Towards the complete structural characterization of a protein folding pathway: the structures of the denatured, transition and native states for the association/folding of two complementary fragments of cleaved chymotrypsin inhibitor. 2. Direct evidence for a nucleation-condensation mechanism.</title>
        <authorList>
            <person name="Neira J.L."/>
            <person name="Davis B."/>
            <person name="Ladurner A.G."/>
            <person name="Buckle A.M."/>
            <person name="de Prat G."/>
            <person name="Fersht A.R."/>
        </authorList>
    </citation>
    <scope>X-RAY CRYSTALLOGRAPHY (2.0 ANGSTROMS)</scope>
</reference>
<reference key="7">
    <citation type="journal article" date="1991" name="J. Mol. Biol.">
        <title>Refinement of the three-dimensional solution structure of barley serine proteinase inhibitor 2 and comparison with the structures in crystals.</title>
        <authorList>
            <person name="Ludvigsen S."/>
            <person name="Shen H.Y."/>
            <person name="Kjaer M."/>
            <person name="Madsen J.C."/>
            <person name="Poulsen F.M."/>
        </authorList>
    </citation>
    <scope>STRUCTURE BY NMR</scope>
</reference>
<feature type="initiator methionine" description="Removed" evidence="2">
    <location>
        <position position="1"/>
    </location>
</feature>
<feature type="chain" id="PRO_0000217649" description="Subtilisin-chymotrypsin inhibitor-2A">
    <location>
        <begin position="2"/>
        <end position="84"/>
    </location>
</feature>
<feature type="region of interest" description="Disordered" evidence="1">
    <location>
        <begin position="1"/>
        <end position="23"/>
    </location>
</feature>
<feature type="site" description="Reactive bond">
    <location>
        <begin position="60"/>
        <end position="61"/>
    </location>
</feature>
<feature type="sequence conflict" description="In Ref. 2; AA sequence." evidence="3" ref="2">
    <original>Q</original>
    <variation>E</variation>
    <location>
        <position position="79"/>
    </location>
</feature>
<feature type="helix" evidence="5">
    <location>
        <begin position="26"/>
        <end position="28"/>
    </location>
</feature>
<feature type="helix" evidence="5">
    <location>
        <begin position="33"/>
        <end position="43"/>
    </location>
</feature>
<feature type="strand" evidence="5">
    <location>
        <begin position="48"/>
        <end position="53"/>
    </location>
</feature>
<feature type="strand" evidence="4">
    <location>
        <begin position="57"/>
        <end position="59"/>
    </location>
</feature>
<feature type="strand" evidence="5">
    <location>
        <begin position="66"/>
        <end position="71"/>
    </location>
</feature>
<feature type="strand" evidence="5">
    <location>
        <begin position="75"/>
        <end position="77"/>
    </location>
</feature>
<sequence>MSSVEKKPEGVNTGAGDRHNLKTEWPELVGKSVEEAKKVILQDKPEAQIIVLPVGTIVTMEYRIDRVRLFVDKLDNIAQVPRVG</sequence>
<accession>P01053</accession>
<name>ICI2_HORVU</name>
<keyword id="KW-0002">3D-structure</keyword>
<keyword id="KW-0903">Direct protein sequencing</keyword>
<keyword id="KW-0646">Protease inhibitor</keyword>
<keyword id="KW-0722">Serine protease inhibitor</keyword>
<organism>
    <name type="scientific">Hordeum vulgare</name>
    <name type="common">Barley</name>
    <dbReference type="NCBI Taxonomy" id="4513"/>
    <lineage>
        <taxon>Eukaryota</taxon>
        <taxon>Viridiplantae</taxon>
        <taxon>Streptophyta</taxon>
        <taxon>Embryophyta</taxon>
        <taxon>Tracheophyta</taxon>
        <taxon>Spermatophyta</taxon>
        <taxon>Magnoliopsida</taxon>
        <taxon>Liliopsida</taxon>
        <taxon>Poales</taxon>
        <taxon>Poaceae</taxon>
        <taxon>BOP clade</taxon>
        <taxon>Pooideae</taxon>
        <taxon>Triticodae</taxon>
        <taxon>Triticeae</taxon>
        <taxon>Hordeinae</taxon>
        <taxon>Hordeum</taxon>
    </lineage>
</organism>
<comment type="function">
    <text>Inhibits both subtilisin and chymotrypsin.</text>
</comment>
<comment type="similarity">
    <text evidence="3">Belongs to the protease inhibitor I13 (potato type I serine protease inhibitor) family.</text>
</comment>
<dbReference type="EMBL" id="X05404">
    <property type="protein sequence ID" value="CAA28988.1"/>
    <property type="molecule type" value="mRNA"/>
</dbReference>
<dbReference type="PIR" id="A01292">
    <property type="entry name" value="EIBH2A"/>
</dbReference>
<dbReference type="PDB" id="1CIQ">
    <property type="method" value="X-ray"/>
    <property type="resolution" value="2.20 A"/>
    <property type="chains" value="A=22-60, B=61-84"/>
</dbReference>
<dbReference type="PDB" id="1CIR">
    <property type="method" value="NMR"/>
    <property type="chains" value="A=22-59, B=61-84"/>
</dbReference>
<dbReference type="PDB" id="1CIS">
    <property type="method" value="NMR"/>
    <property type="chains" value="A=22-84"/>
</dbReference>
<dbReference type="PDB" id="1COA">
    <property type="method" value="X-ray"/>
    <property type="resolution" value="2.20 A"/>
    <property type="chains" value="I=22-84"/>
</dbReference>
<dbReference type="PDB" id="1CQ4">
    <property type="method" value="X-ray"/>
    <property type="resolution" value="1.80 A"/>
    <property type="chains" value="A=21-59, B=61-84"/>
</dbReference>
<dbReference type="PDB" id="1LW6">
    <property type="method" value="X-ray"/>
    <property type="resolution" value="1.50 A"/>
    <property type="chains" value="I=22-84"/>
</dbReference>
<dbReference type="PDB" id="1YPA">
    <property type="method" value="X-ray"/>
    <property type="resolution" value="2.00 A"/>
    <property type="chains" value="I=22-84"/>
</dbReference>
<dbReference type="PDB" id="1YPB">
    <property type="method" value="X-ray"/>
    <property type="resolution" value="2.00 A"/>
    <property type="chains" value="I=22-84"/>
</dbReference>
<dbReference type="PDB" id="1YPC">
    <property type="method" value="X-ray"/>
    <property type="resolution" value="1.70 A"/>
    <property type="chains" value="I=22-84"/>
</dbReference>
<dbReference type="PDB" id="2CI2">
    <property type="method" value="X-ray"/>
    <property type="resolution" value="2.00 A"/>
    <property type="chains" value="I=2-84"/>
</dbReference>
<dbReference type="PDB" id="2SNI">
    <property type="method" value="X-ray"/>
    <property type="resolution" value="2.10 A"/>
    <property type="chains" value="I=2-84"/>
</dbReference>
<dbReference type="PDB" id="3CI2">
    <property type="method" value="NMR"/>
    <property type="chains" value="A=19-84"/>
</dbReference>
<dbReference type="PDB" id="5FBZ">
    <property type="method" value="X-ray"/>
    <property type="resolution" value="1.90 A"/>
    <property type="chains" value="B/D=13-84"/>
</dbReference>
<dbReference type="PDB" id="5FFN">
    <property type="method" value="X-ray"/>
    <property type="resolution" value="1.80 A"/>
    <property type="chains" value="I=13-84"/>
</dbReference>
<dbReference type="PDB" id="6QIY">
    <property type="method" value="X-ray"/>
    <property type="resolution" value="1.50 A"/>
    <property type="chains" value="A=20-84"/>
</dbReference>
<dbReference type="PDB" id="6QIZ">
    <property type="method" value="X-ray"/>
    <property type="resolution" value="1.65 A"/>
    <property type="chains" value="A=21-84"/>
</dbReference>
<dbReference type="PDB" id="7A1H">
    <property type="method" value="X-ray"/>
    <property type="resolution" value="1.90 A"/>
    <property type="chains" value="A=21-84"/>
</dbReference>
<dbReference type="PDB" id="7A3M">
    <property type="method" value="X-ray"/>
    <property type="resolution" value="1.01 A"/>
    <property type="chains" value="A=21-84"/>
</dbReference>
<dbReference type="PDB" id="7AOK">
    <property type="method" value="X-ray"/>
    <property type="resolution" value="1.87 A"/>
    <property type="chains" value="A=21-84"/>
</dbReference>
<dbReference type="PDB" id="7AON">
    <property type="method" value="X-ray"/>
    <property type="resolution" value="1.30 A"/>
    <property type="chains" value="A=21-84"/>
</dbReference>
<dbReference type="PDBsum" id="1CIQ"/>
<dbReference type="PDBsum" id="1CIR"/>
<dbReference type="PDBsum" id="1CIS"/>
<dbReference type="PDBsum" id="1COA"/>
<dbReference type="PDBsum" id="1CQ4"/>
<dbReference type="PDBsum" id="1LW6"/>
<dbReference type="PDBsum" id="1YPA"/>
<dbReference type="PDBsum" id="1YPB"/>
<dbReference type="PDBsum" id="1YPC"/>
<dbReference type="PDBsum" id="2CI2"/>
<dbReference type="PDBsum" id="2SNI"/>
<dbReference type="PDBsum" id="3CI2"/>
<dbReference type="PDBsum" id="5FBZ"/>
<dbReference type="PDBsum" id="5FFN"/>
<dbReference type="PDBsum" id="6QIY"/>
<dbReference type="PDBsum" id="6QIZ"/>
<dbReference type="PDBsum" id="7A1H"/>
<dbReference type="PDBsum" id="7A3M"/>
<dbReference type="PDBsum" id="7AOK"/>
<dbReference type="PDBsum" id="7AON"/>
<dbReference type="BMRB" id="P01053"/>
<dbReference type="SMR" id="P01053"/>
<dbReference type="IntAct" id="P01053">
    <property type="interactions" value="1"/>
</dbReference>
<dbReference type="MINT" id="P01053"/>
<dbReference type="MEROPS" id="I13.003"/>
<dbReference type="OMA" id="FVEYSIV"/>
<dbReference type="EvolutionaryTrace" id="P01053"/>
<dbReference type="ExpressionAtlas" id="P01053">
    <property type="expression patterns" value="baseline"/>
</dbReference>
<dbReference type="GO" id="GO:0004867">
    <property type="term" value="F:serine-type endopeptidase inhibitor activity"/>
    <property type="evidence" value="ECO:0007669"/>
    <property type="project" value="UniProtKB-KW"/>
</dbReference>
<dbReference type="GO" id="GO:0009611">
    <property type="term" value="P:response to wounding"/>
    <property type="evidence" value="ECO:0007669"/>
    <property type="project" value="InterPro"/>
</dbReference>
<dbReference type="Gene3D" id="3.30.10.10">
    <property type="entry name" value="Trypsin Inhibitor V, subunit A"/>
    <property type="match status" value="1"/>
</dbReference>
<dbReference type="InterPro" id="IPR000864">
    <property type="entry name" value="Prot_inh_pot1"/>
</dbReference>
<dbReference type="InterPro" id="IPR036354">
    <property type="entry name" value="Prot_inh_pot1_sf"/>
</dbReference>
<dbReference type="PANTHER" id="PTHR33091">
    <property type="entry name" value="PROTEIN, PUTATIVE, EXPRESSED-RELATED"/>
    <property type="match status" value="1"/>
</dbReference>
<dbReference type="PANTHER" id="PTHR33091:SF55">
    <property type="entry name" value="SUBTILISIN-CHYMOTRYPSIN INHIBITOR WSCI"/>
    <property type="match status" value="1"/>
</dbReference>
<dbReference type="Pfam" id="PF00280">
    <property type="entry name" value="potato_inhibit"/>
    <property type="match status" value="1"/>
</dbReference>
<dbReference type="PRINTS" id="PR00292">
    <property type="entry name" value="POTATOINHBTR"/>
</dbReference>
<dbReference type="SUPFAM" id="SSF54654">
    <property type="entry name" value="CI-2 family of serine protease inhibitors"/>
    <property type="match status" value="1"/>
</dbReference>
<dbReference type="PROSITE" id="PS00285">
    <property type="entry name" value="POTATO_INHIBITOR"/>
    <property type="match status" value="1"/>
</dbReference>
<protein>
    <recommendedName>
        <fullName>Subtilisin-chymotrypsin inhibitor-2A</fullName>
        <shortName>CI-2A</shortName>
    </recommendedName>
</protein>
<evidence type="ECO:0000256" key="1">
    <source>
        <dbReference type="SAM" id="MobiDB-lite"/>
    </source>
</evidence>
<evidence type="ECO:0000269" key="2">
    <source ref="2"/>
</evidence>
<evidence type="ECO:0000305" key="3"/>
<evidence type="ECO:0007829" key="4">
    <source>
        <dbReference type="PDB" id="1LW6"/>
    </source>
</evidence>
<evidence type="ECO:0007829" key="5">
    <source>
        <dbReference type="PDB" id="7A3M"/>
    </source>
</evidence>